<name>F16PA_ACIBY</name>
<comment type="catalytic activity">
    <reaction evidence="1">
        <text>beta-D-fructose 1,6-bisphosphate + H2O = beta-D-fructose 6-phosphate + phosphate</text>
        <dbReference type="Rhea" id="RHEA:11064"/>
        <dbReference type="ChEBI" id="CHEBI:15377"/>
        <dbReference type="ChEBI" id="CHEBI:32966"/>
        <dbReference type="ChEBI" id="CHEBI:43474"/>
        <dbReference type="ChEBI" id="CHEBI:57634"/>
        <dbReference type="EC" id="3.1.3.11"/>
    </reaction>
</comment>
<comment type="cofactor">
    <cofactor evidence="1">
        <name>Mg(2+)</name>
        <dbReference type="ChEBI" id="CHEBI:18420"/>
    </cofactor>
    <text evidence="1">Binds 2 magnesium ions per subunit.</text>
</comment>
<comment type="pathway">
    <text evidence="1">Carbohydrate biosynthesis; gluconeogenesis.</text>
</comment>
<comment type="subunit">
    <text evidence="1">Homotetramer.</text>
</comment>
<comment type="subcellular location">
    <subcellularLocation>
        <location evidence="1">Cytoplasm</location>
    </subcellularLocation>
</comment>
<comment type="similarity">
    <text evidence="1">Belongs to the FBPase class 1 family.</text>
</comment>
<feature type="chain" id="PRO_0000364449" description="Fructose-1,6-bisphosphatase class 1">
    <location>
        <begin position="1"/>
        <end position="323"/>
    </location>
</feature>
<feature type="binding site" evidence="1">
    <location>
        <position position="88"/>
    </location>
    <ligand>
        <name>Mg(2+)</name>
        <dbReference type="ChEBI" id="CHEBI:18420"/>
        <label>1</label>
    </ligand>
</feature>
<feature type="binding site" evidence="1">
    <location>
        <position position="107"/>
    </location>
    <ligand>
        <name>Mg(2+)</name>
        <dbReference type="ChEBI" id="CHEBI:18420"/>
        <label>1</label>
    </ligand>
</feature>
<feature type="binding site" evidence="1">
    <location>
        <position position="107"/>
    </location>
    <ligand>
        <name>Mg(2+)</name>
        <dbReference type="ChEBI" id="CHEBI:18420"/>
        <label>2</label>
    </ligand>
</feature>
<feature type="binding site" evidence="1">
    <location>
        <position position="109"/>
    </location>
    <ligand>
        <name>Mg(2+)</name>
        <dbReference type="ChEBI" id="CHEBI:18420"/>
        <label>1</label>
    </ligand>
</feature>
<feature type="binding site" evidence="1">
    <location>
        <begin position="110"/>
        <end position="113"/>
    </location>
    <ligand>
        <name>substrate</name>
    </ligand>
</feature>
<feature type="binding site" evidence="1">
    <location>
        <position position="110"/>
    </location>
    <ligand>
        <name>Mg(2+)</name>
        <dbReference type="ChEBI" id="CHEBI:18420"/>
        <label>2</label>
    </ligand>
</feature>
<feature type="binding site" evidence="1">
    <location>
        <position position="200"/>
    </location>
    <ligand>
        <name>substrate</name>
    </ligand>
</feature>
<feature type="binding site" evidence="1">
    <location>
        <position position="272"/>
    </location>
    <ligand>
        <name>Mg(2+)</name>
        <dbReference type="ChEBI" id="CHEBI:18420"/>
        <label>2</label>
    </ligand>
</feature>
<dbReference type="EC" id="3.1.3.11" evidence="1"/>
<dbReference type="EMBL" id="CU459141">
    <property type="protein sequence ID" value="CAM85846.1"/>
    <property type="molecule type" value="Genomic_DNA"/>
</dbReference>
<dbReference type="RefSeq" id="WP_000067970.1">
    <property type="nucleotide sequence ID" value="NZ_JBDGFB010000021.1"/>
</dbReference>
<dbReference type="SMR" id="B0VDK0"/>
<dbReference type="EnsemblBacteria" id="CAM85846">
    <property type="protein sequence ID" value="CAM85846"/>
    <property type="gene ID" value="ABAYE0899"/>
</dbReference>
<dbReference type="KEGG" id="aby:ABAYE0899"/>
<dbReference type="HOGENOM" id="CLU_039977_0_0_6"/>
<dbReference type="UniPathway" id="UPA00138"/>
<dbReference type="GO" id="GO:0005829">
    <property type="term" value="C:cytosol"/>
    <property type="evidence" value="ECO:0007669"/>
    <property type="project" value="TreeGrafter"/>
</dbReference>
<dbReference type="GO" id="GO:0042132">
    <property type="term" value="F:fructose 1,6-bisphosphate 1-phosphatase activity"/>
    <property type="evidence" value="ECO:0007669"/>
    <property type="project" value="UniProtKB-UniRule"/>
</dbReference>
<dbReference type="GO" id="GO:0000287">
    <property type="term" value="F:magnesium ion binding"/>
    <property type="evidence" value="ECO:0007669"/>
    <property type="project" value="UniProtKB-UniRule"/>
</dbReference>
<dbReference type="GO" id="GO:0030388">
    <property type="term" value="P:fructose 1,6-bisphosphate metabolic process"/>
    <property type="evidence" value="ECO:0007669"/>
    <property type="project" value="TreeGrafter"/>
</dbReference>
<dbReference type="GO" id="GO:0006002">
    <property type="term" value="P:fructose 6-phosphate metabolic process"/>
    <property type="evidence" value="ECO:0007669"/>
    <property type="project" value="TreeGrafter"/>
</dbReference>
<dbReference type="GO" id="GO:0006000">
    <property type="term" value="P:fructose metabolic process"/>
    <property type="evidence" value="ECO:0007669"/>
    <property type="project" value="TreeGrafter"/>
</dbReference>
<dbReference type="GO" id="GO:0006094">
    <property type="term" value="P:gluconeogenesis"/>
    <property type="evidence" value="ECO:0007669"/>
    <property type="project" value="UniProtKB-UniRule"/>
</dbReference>
<dbReference type="GO" id="GO:0005986">
    <property type="term" value="P:sucrose biosynthetic process"/>
    <property type="evidence" value="ECO:0007669"/>
    <property type="project" value="TreeGrafter"/>
</dbReference>
<dbReference type="CDD" id="cd00354">
    <property type="entry name" value="FBPase"/>
    <property type="match status" value="1"/>
</dbReference>
<dbReference type="FunFam" id="3.30.540.10:FF:000002">
    <property type="entry name" value="Fructose-1,6-bisphosphatase class 1"/>
    <property type="match status" value="1"/>
</dbReference>
<dbReference type="FunFam" id="3.40.190.80:FF:000011">
    <property type="entry name" value="Fructose-1,6-bisphosphatase class 1"/>
    <property type="match status" value="1"/>
</dbReference>
<dbReference type="Gene3D" id="3.40.190.80">
    <property type="match status" value="1"/>
</dbReference>
<dbReference type="Gene3D" id="3.30.540.10">
    <property type="entry name" value="Fructose-1,6-Bisphosphatase, subunit A, domain 1"/>
    <property type="match status" value="1"/>
</dbReference>
<dbReference type="HAMAP" id="MF_01855">
    <property type="entry name" value="FBPase_class1"/>
    <property type="match status" value="1"/>
</dbReference>
<dbReference type="InterPro" id="IPR044015">
    <property type="entry name" value="FBPase_C_dom"/>
</dbReference>
<dbReference type="InterPro" id="IPR000146">
    <property type="entry name" value="FBPase_class-1"/>
</dbReference>
<dbReference type="InterPro" id="IPR033391">
    <property type="entry name" value="FBPase_N"/>
</dbReference>
<dbReference type="InterPro" id="IPR028343">
    <property type="entry name" value="FBPtase"/>
</dbReference>
<dbReference type="NCBIfam" id="NF006779">
    <property type="entry name" value="PRK09293.1-3"/>
    <property type="match status" value="1"/>
</dbReference>
<dbReference type="NCBIfam" id="NF006780">
    <property type="entry name" value="PRK09293.1-4"/>
    <property type="match status" value="1"/>
</dbReference>
<dbReference type="PANTHER" id="PTHR11556">
    <property type="entry name" value="FRUCTOSE-1,6-BISPHOSPHATASE-RELATED"/>
    <property type="match status" value="1"/>
</dbReference>
<dbReference type="PANTHER" id="PTHR11556:SF35">
    <property type="entry name" value="SEDOHEPTULOSE-1,7-BISPHOSPHATASE, CHLOROPLASTIC"/>
    <property type="match status" value="1"/>
</dbReference>
<dbReference type="Pfam" id="PF00316">
    <property type="entry name" value="FBPase"/>
    <property type="match status" value="1"/>
</dbReference>
<dbReference type="Pfam" id="PF18913">
    <property type="entry name" value="FBPase_C"/>
    <property type="match status" value="1"/>
</dbReference>
<dbReference type="PIRSF" id="PIRSF500210">
    <property type="entry name" value="FBPtase"/>
    <property type="match status" value="1"/>
</dbReference>
<dbReference type="PIRSF" id="PIRSF000904">
    <property type="entry name" value="FBPtase_SBPase"/>
    <property type="match status" value="1"/>
</dbReference>
<dbReference type="PRINTS" id="PR00115">
    <property type="entry name" value="F16BPHPHTASE"/>
</dbReference>
<dbReference type="SUPFAM" id="SSF56655">
    <property type="entry name" value="Carbohydrate phosphatase"/>
    <property type="match status" value="1"/>
</dbReference>
<evidence type="ECO:0000255" key="1">
    <source>
        <dbReference type="HAMAP-Rule" id="MF_01855"/>
    </source>
</evidence>
<keyword id="KW-0119">Carbohydrate metabolism</keyword>
<keyword id="KW-0963">Cytoplasm</keyword>
<keyword id="KW-0378">Hydrolase</keyword>
<keyword id="KW-0460">Magnesium</keyword>
<keyword id="KW-0479">Metal-binding</keyword>
<proteinExistence type="inferred from homology"/>
<reference key="1">
    <citation type="journal article" date="2008" name="PLoS ONE">
        <title>Comparative analysis of Acinetobacters: three genomes for three lifestyles.</title>
        <authorList>
            <person name="Vallenet D."/>
            <person name="Nordmann P."/>
            <person name="Barbe V."/>
            <person name="Poirel L."/>
            <person name="Mangenot S."/>
            <person name="Bataille E."/>
            <person name="Dossat C."/>
            <person name="Gas S."/>
            <person name="Kreimeyer A."/>
            <person name="Lenoble P."/>
            <person name="Oztas S."/>
            <person name="Poulain J."/>
            <person name="Segurens B."/>
            <person name="Robert C."/>
            <person name="Abergel C."/>
            <person name="Claverie J.-M."/>
            <person name="Raoult D."/>
            <person name="Medigue C."/>
            <person name="Weissenbach J."/>
            <person name="Cruveiller S."/>
        </authorList>
    </citation>
    <scope>NUCLEOTIDE SEQUENCE [LARGE SCALE GENOMIC DNA]</scope>
    <source>
        <strain>AYE</strain>
    </source>
</reference>
<organism>
    <name type="scientific">Acinetobacter baumannii (strain AYE)</name>
    <dbReference type="NCBI Taxonomy" id="509173"/>
    <lineage>
        <taxon>Bacteria</taxon>
        <taxon>Pseudomonadati</taxon>
        <taxon>Pseudomonadota</taxon>
        <taxon>Gammaproteobacteria</taxon>
        <taxon>Moraxellales</taxon>
        <taxon>Moraxellaceae</taxon>
        <taxon>Acinetobacter</taxon>
        <taxon>Acinetobacter calcoaceticus/baumannii complex</taxon>
    </lineage>
</organism>
<sequence length="323" mass="35440">MSNLTLSQFLQQEKGNLTPELAQVIDTIAATCKTIDQALQKGALAGILGSAGNENVQGETQKKLDVISNDYLIDALKVHPHVGGLASEELDDFTPAQENGEYLVLFDPLDGSSNIDINMCVGTIFSILPAKNAITQAQDFMQAGTQQVAAGYVLYGPSTMMALTVGNGVAFFTLDPVTQTFLLTTENVQVSADTQEFAINASNQRHWEQPVKQYIEELLAGKTSVREKDFNMRWVACMVGDVHRILCRGGIFLYPYDLKDPKKAGRLRLMYEANPMSMLIEQAGGASTTGRVRILEIEPTELHQRVPVIIGSKNEVERVTSYH</sequence>
<protein>
    <recommendedName>
        <fullName evidence="1">Fructose-1,6-bisphosphatase class 1</fullName>
        <shortName evidence="1">FBPase class 1</shortName>
        <ecNumber evidence="1">3.1.3.11</ecNumber>
    </recommendedName>
    <alternativeName>
        <fullName evidence="1">D-fructose-1,6-bisphosphate 1-phosphohydrolase class 1</fullName>
    </alternativeName>
</protein>
<accession>B0VDK0</accession>
<gene>
    <name evidence="1" type="primary">fbp</name>
    <name type="ordered locus">ABAYE0899</name>
</gene>